<proteinExistence type="evidence at transcript level"/>
<feature type="chain" id="PRO_0000431869" description="Inositol-tetrakisphosphate 1-kinase 1">
    <location>
        <begin position="1"/>
        <end position="354"/>
    </location>
</feature>
<feature type="domain" description="ATP-grasp" evidence="4">
    <location>
        <begin position="140"/>
        <end position="347"/>
    </location>
</feature>
<feature type="region of interest" description="Disordered" evidence="5">
    <location>
        <begin position="1"/>
        <end position="24"/>
    </location>
</feature>
<feature type="compositionally biased region" description="Basic and acidic residues" evidence="5">
    <location>
        <begin position="1"/>
        <end position="16"/>
    </location>
</feature>
<feature type="binding site" evidence="3">
    <location>
        <position position="53"/>
    </location>
    <ligand>
        <name>1D-myo-inositol 1,3,4-trisphosphate</name>
        <dbReference type="ChEBI" id="CHEBI:58414"/>
    </ligand>
</feature>
<feature type="binding site" evidence="3">
    <location>
        <position position="95"/>
    </location>
    <ligand>
        <name>1D-myo-inositol 1,3,4-trisphosphate</name>
        <dbReference type="ChEBI" id="CHEBI:58414"/>
    </ligand>
</feature>
<feature type="binding site" evidence="1">
    <location>
        <position position="130"/>
    </location>
    <ligand>
        <name>ATP</name>
        <dbReference type="ChEBI" id="CHEBI:30616"/>
    </ligand>
</feature>
<feature type="binding site" evidence="1">
    <location>
        <position position="180"/>
    </location>
    <ligand>
        <name>ATP</name>
        <dbReference type="ChEBI" id="CHEBI:30616"/>
    </ligand>
</feature>
<feature type="binding site" evidence="3">
    <location>
        <position position="191"/>
    </location>
    <ligand>
        <name>1D-myo-inositol 1,3,4-trisphosphate</name>
        <dbReference type="ChEBI" id="CHEBI:58414"/>
    </ligand>
</feature>
<feature type="binding site" evidence="1">
    <location>
        <begin position="212"/>
        <end position="223"/>
    </location>
    <ligand>
        <name>ATP</name>
        <dbReference type="ChEBI" id="CHEBI:30616"/>
    </ligand>
</feature>
<feature type="binding site" evidence="3">
    <location>
        <position position="223"/>
    </location>
    <ligand>
        <name>1D-myo-inositol 1,3,4-trisphosphate</name>
        <dbReference type="ChEBI" id="CHEBI:58414"/>
    </ligand>
</feature>
<feature type="binding site" evidence="1">
    <location>
        <position position="238"/>
    </location>
    <ligand>
        <name>ATP</name>
        <dbReference type="ChEBI" id="CHEBI:30616"/>
    </ligand>
</feature>
<feature type="binding site" evidence="1">
    <location>
        <position position="303"/>
    </location>
    <ligand>
        <name>Mg(2+)</name>
        <dbReference type="ChEBI" id="CHEBI:18420"/>
        <label>1</label>
    </ligand>
</feature>
<feature type="binding site" evidence="1">
    <location>
        <position position="318"/>
    </location>
    <ligand>
        <name>Mg(2+)</name>
        <dbReference type="ChEBI" id="CHEBI:18420"/>
        <label>1</label>
    </ligand>
</feature>
<feature type="binding site" evidence="1">
    <location>
        <position position="318"/>
    </location>
    <ligand>
        <name>Mg(2+)</name>
        <dbReference type="ChEBI" id="CHEBI:18420"/>
        <label>2</label>
    </ligand>
</feature>
<feature type="binding site" evidence="3">
    <location>
        <position position="320"/>
    </location>
    <ligand>
        <name>1D-myo-inositol 1,3,4-trisphosphate</name>
        <dbReference type="ChEBI" id="CHEBI:58414"/>
    </ligand>
</feature>
<feature type="binding site" evidence="1">
    <location>
        <position position="320"/>
    </location>
    <ligand>
        <name>Mg(2+)</name>
        <dbReference type="ChEBI" id="CHEBI:18420"/>
        <label>2</label>
    </ligand>
</feature>
<reference key="1">
    <citation type="journal article" date="2003" name="Science">
        <title>In-depth view of structure, activity, and evolution of rice chromosome 10.</title>
        <authorList>
            <person name="Yu Y."/>
            <person name="Rambo T."/>
            <person name="Currie J."/>
            <person name="Saski C."/>
            <person name="Kim H.-R."/>
            <person name="Collura K."/>
            <person name="Thompson S."/>
            <person name="Simmons J."/>
            <person name="Yang T.-J."/>
            <person name="Nah G."/>
            <person name="Patel A.J."/>
            <person name="Thurmond S."/>
            <person name="Henry D."/>
            <person name="Oates R."/>
            <person name="Palmer M."/>
            <person name="Pries G."/>
            <person name="Gibson J."/>
            <person name="Anderson H."/>
            <person name="Paradkar M."/>
            <person name="Crane L."/>
            <person name="Dale J."/>
            <person name="Carver M.B."/>
            <person name="Wood T."/>
            <person name="Frisch D."/>
            <person name="Engler F."/>
            <person name="Soderlund C."/>
            <person name="Palmer L.E."/>
            <person name="Teytelman L."/>
            <person name="Nascimento L."/>
            <person name="De la Bastide M."/>
            <person name="Spiegel L."/>
            <person name="Ware D."/>
            <person name="O'Shaughnessy A."/>
            <person name="Dike S."/>
            <person name="Dedhia N."/>
            <person name="Preston R."/>
            <person name="Huang E."/>
            <person name="Ferraro K."/>
            <person name="Kuit K."/>
            <person name="Miller B."/>
            <person name="Zutavern T."/>
            <person name="Katzenberger F."/>
            <person name="Muller S."/>
            <person name="Balija V."/>
            <person name="Martienssen R.A."/>
            <person name="Stein L."/>
            <person name="Minx P."/>
            <person name="Johnson D."/>
            <person name="Cordum H."/>
            <person name="Mardis E."/>
            <person name="Cheng Z."/>
            <person name="Jiang J."/>
            <person name="Wilson R."/>
            <person name="McCombie W.R."/>
            <person name="Wing R.A."/>
            <person name="Yuan Q."/>
            <person name="Ouyang S."/>
            <person name="Liu J."/>
            <person name="Jones K.M."/>
            <person name="Gansberger K."/>
            <person name="Moffat K."/>
            <person name="Hill J."/>
            <person name="Tsitrin T."/>
            <person name="Overton L."/>
            <person name="Bera J."/>
            <person name="Kim M."/>
            <person name="Jin S."/>
            <person name="Tallon L."/>
            <person name="Ciecko A."/>
            <person name="Pai G."/>
            <person name="Van Aken S."/>
            <person name="Utterback T."/>
            <person name="Reidmuller S."/>
            <person name="Bormann J."/>
            <person name="Feldblyum T."/>
            <person name="Hsiao J."/>
            <person name="Zismann V."/>
            <person name="Blunt S."/>
            <person name="de Vazeille A.R."/>
            <person name="Shaffer T."/>
            <person name="Koo H."/>
            <person name="Suh B."/>
            <person name="Yang Q."/>
            <person name="Haas B."/>
            <person name="Peterson J."/>
            <person name="Pertea M."/>
            <person name="Volfovsky N."/>
            <person name="Wortman J."/>
            <person name="White O."/>
            <person name="Salzberg S.L."/>
            <person name="Fraser C.M."/>
            <person name="Buell C.R."/>
            <person name="Messing J."/>
            <person name="Song R."/>
            <person name="Fuks G."/>
            <person name="Llaca V."/>
            <person name="Kovchak S."/>
            <person name="Young S."/>
            <person name="Bowers J.E."/>
            <person name="Paterson A.H."/>
            <person name="Johns M.A."/>
            <person name="Mao L."/>
            <person name="Pan H."/>
            <person name="Dean R.A."/>
        </authorList>
    </citation>
    <scope>NUCLEOTIDE SEQUENCE [LARGE SCALE GENOMIC DNA]</scope>
    <source>
        <strain>cv. Nipponbare</strain>
    </source>
</reference>
<reference key="2">
    <citation type="journal article" date="2005" name="Nature">
        <title>The map-based sequence of the rice genome.</title>
        <authorList>
            <consortium name="International rice genome sequencing project (IRGSP)"/>
        </authorList>
    </citation>
    <scope>NUCLEOTIDE SEQUENCE [LARGE SCALE GENOMIC DNA]</scope>
    <source>
        <strain>cv. Nipponbare</strain>
    </source>
</reference>
<reference key="3">
    <citation type="journal article" date="2008" name="Nucleic Acids Res.">
        <title>The rice annotation project database (RAP-DB): 2008 update.</title>
        <authorList>
            <consortium name="The rice annotation project (RAP)"/>
        </authorList>
    </citation>
    <scope>GENOME REANNOTATION</scope>
    <source>
        <strain>cv. Nipponbare</strain>
    </source>
</reference>
<reference key="4">
    <citation type="journal article" date="2013" name="Rice">
        <title>Improvement of the Oryza sativa Nipponbare reference genome using next generation sequence and optical map data.</title>
        <authorList>
            <person name="Kawahara Y."/>
            <person name="de la Bastide M."/>
            <person name="Hamilton J.P."/>
            <person name="Kanamori H."/>
            <person name="McCombie W.R."/>
            <person name="Ouyang S."/>
            <person name="Schwartz D.C."/>
            <person name="Tanaka T."/>
            <person name="Wu J."/>
            <person name="Zhou S."/>
            <person name="Childs K.L."/>
            <person name="Davidson R.M."/>
            <person name="Lin H."/>
            <person name="Quesada-Ocampo L."/>
            <person name="Vaillancourt B."/>
            <person name="Sakai H."/>
            <person name="Lee S.S."/>
            <person name="Kim J."/>
            <person name="Numa H."/>
            <person name="Itoh T."/>
            <person name="Buell C.R."/>
            <person name="Matsumoto T."/>
        </authorList>
    </citation>
    <scope>GENOME REANNOTATION</scope>
    <source>
        <strain>cv. Nipponbare</strain>
    </source>
</reference>
<reference key="5">
    <citation type="journal article" date="2005" name="PLoS Biol.">
        <title>The genomes of Oryza sativa: a history of duplications.</title>
        <authorList>
            <person name="Yu J."/>
            <person name="Wang J."/>
            <person name="Lin W."/>
            <person name="Li S."/>
            <person name="Li H."/>
            <person name="Zhou J."/>
            <person name="Ni P."/>
            <person name="Dong W."/>
            <person name="Hu S."/>
            <person name="Zeng C."/>
            <person name="Zhang J."/>
            <person name="Zhang Y."/>
            <person name="Li R."/>
            <person name="Xu Z."/>
            <person name="Li S."/>
            <person name="Li X."/>
            <person name="Zheng H."/>
            <person name="Cong L."/>
            <person name="Lin L."/>
            <person name="Yin J."/>
            <person name="Geng J."/>
            <person name="Li G."/>
            <person name="Shi J."/>
            <person name="Liu J."/>
            <person name="Lv H."/>
            <person name="Li J."/>
            <person name="Wang J."/>
            <person name="Deng Y."/>
            <person name="Ran L."/>
            <person name="Shi X."/>
            <person name="Wang X."/>
            <person name="Wu Q."/>
            <person name="Li C."/>
            <person name="Ren X."/>
            <person name="Wang J."/>
            <person name="Wang X."/>
            <person name="Li D."/>
            <person name="Liu D."/>
            <person name="Zhang X."/>
            <person name="Ji Z."/>
            <person name="Zhao W."/>
            <person name="Sun Y."/>
            <person name="Zhang Z."/>
            <person name="Bao J."/>
            <person name="Han Y."/>
            <person name="Dong L."/>
            <person name="Ji J."/>
            <person name="Chen P."/>
            <person name="Wu S."/>
            <person name="Liu J."/>
            <person name="Xiao Y."/>
            <person name="Bu D."/>
            <person name="Tan J."/>
            <person name="Yang L."/>
            <person name="Ye C."/>
            <person name="Zhang J."/>
            <person name="Xu J."/>
            <person name="Zhou Y."/>
            <person name="Yu Y."/>
            <person name="Zhang B."/>
            <person name="Zhuang S."/>
            <person name="Wei H."/>
            <person name="Liu B."/>
            <person name="Lei M."/>
            <person name="Yu H."/>
            <person name="Li Y."/>
            <person name="Xu H."/>
            <person name="Wei S."/>
            <person name="He X."/>
            <person name="Fang L."/>
            <person name="Zhang Z."/>
            <person name="Zhang Y."/>
            <person name="Huang X."/>
            <person name="Su Z."/>
            <person name="Tong W."/>
            <person name="Li J."/>
            <person name="Tong Z."/>
            <person name="Li S."/>
            <person name="Ye J."/>
            <person name="Wang L."/>
            <person name="Fang L."/>
            <person name="Lei T."/>
            <person name="Chen C.-S."/>
            <person name="Chen H.-C."/>
            <person name="Xu Z."/>
            <person name="Li H."/>
            <person name="Huang H."/>
            <person name="Zhang F."/>
            <person name="Xu H."/>
            <person name="Li N."/>
            <person name="Zhao C."/>
            <person name="Li S."/>
            <person name="Dong L."/>
            <person name="Huang Y."/>
            <person name="Li L."/>
            <person name="Xi Y."/>
            <person name="Qi Q."/>
            <person name="Li W."/>
            <person name="Zhang B."/>
            <person name="Hu W."/>
            <person name="Zhang Y."/>
            <person name="Tian X."/>
            <person name="Jiao Y."/>
            <person name="Liang X."/>
            <person name="Jin J."/>
            <person name="Gao L."/>
            <person name="Zheng W."/>
            <person name="Hao B."/>
            <person name="Liu S.-M."/>
            <person name="Wang W."/>
            <person name="Yuan L."/>
            <person name="Cao M."/>
            <person name="McDermott J."/>
            <person name="Samudrala R."/>
            <person name="Wang J."/>
            <person name="Wong G.K.-S."/>
            <person name="Yang H."/>
        </authorList>
    </citation>
    <scope>NUCLEOTIDE SEQUENCE [LARGE SCALE GENOMIC DNA]</scope>
    <source>
        <strain>cv. Nipponbare</strain>
    </source>
</reference>
<reference key="6">
    <citation type="journal article" date="2003" name="Science">
        <title>Collection, mapping, and annotation of over 28,000 cDNA clones from japonica rice.</title>
        <authorList>
            <consortium name="The rice full-length cDNA consortium"/>
        </authorList>
    </citation>
    <scope>NUCLEOTIDE SEQUENCE [LARGE SCALE MRNA]</scope>
    <source>
        <strain>cv. Nipponbare</strain>
    </source>
</reference>
<reference key="7">
    <citation type="journal article" date="2007" name="Gene">
        <title>Expression pattern of inositol phosphate-related enzymes in rice (Oryza sativa L.): implications for the phytic acid biosynthetic pathway.</title>
        <authorList>
            <person name="Suzuki M."/>
            <person name="Tanaka K."/>
            <person name="Kuwano M."/>
            <person name="Yoshida K.T."/>
        </authorList>
    </citation>
    <scope>TISSUE SPECIFICITY</scope>
    <scope>GENE FAMILY</scope>
    <scope>NOMENCLATURE</scope>
</reference>
<reference key="8">
    <citation type="journal article" date="2011" name="Plant Mol. Biol.">
        <title>Characterization of an inositol 1,3,4-trisphosphate 5/6-kinase gene that is essential for drought and salt stress responses in rice.</title>
        <authorList>
            <person name="Du H."/>
            <person name="Liu L."/>
            <person name="You L."/>
            <person name="Yang M."/>
            <person name="He Y."/>
            <person name="Li X."/>
            <person name="Xiong L."/>
        </authorList>
    </citation>
    <scope>INDUCTION</scope>
    <scope>GENE FAMILY</scope>
    <scope>NOMENCLATURE</scope>
</reference>
<protein>
    <recommendedName>
        <fullName evidence="10">Inositol-tetrakisphosphate 1-kinase 1</fullName>
        <ecNumber evidence="10">2.7.1.134</ecNumber>
    </recommendedName>
    <alternativeName>
        <fullName evidence="10">Inositol 1,3,4-trisphosphate 5/6-kinase 1</fullName>
        <shortName evidence="10">Inositol-triphosphate 5/6-kinase 1</shortName>
        <shortName evidence="10">Ins(1,3,4)P(3) 5/6-kinase 1</shortName>
        <shortName evidence="8">OsITP5/6K-1</shortName>
        <shortName evidence="9">OsITPK1</shortName>
        <ecNumber evidence="10">2.7.1.159</ecNumber>
    </alternativeName>
    <alternativeName>
        <fullName evidence="10">OsITL2</fullName>
    </alternativeName>
</protein>
<sequence length="354" mass="40002">MRVHEEASEDKEREVEEAPDLMPLSPPLTAAATAAVVAVAGQRLVVGYALTKKKVKSFLQPKLLSLARKKSIHFVSIDETRPLSEQGPFDIILHKLTDKEWQQVLEDYREEHPEVTVLDPPNAIQHLHNRQSMLQEVADLNLSNAYGEVCTPRQLVIMKDPLSIPSAVAKAGLTLPLVAKPLVVDGTSKSHELSLAYVETSLSMLDPPLVLQEFVNHGGILFKVYVVGETIRVVRRFSLPDVNIYDLENNDGIFRFPRVSCATNTAEDAEVDPSIAELPPKPLLEKLGRELRRRLGLRLFNFDMIREHGRKDRYYVIDINYFPGYGKMPGYEHIFIDFLLSLVQNKYKRRLSGS</sequence>
<comment type="function">
    <text evidence="2">Kinase that can phosphorylate various inositol polyphosphate such as Ins(3,4,5,6)P4 or Ins(1,3,4)P3 and participates in phytic acid biosynthesis in developing seeds. Phytic acid is the primary storage form of phosphorus in cereal grains and other plant seeds.</text>
</comment>
<comment type="catalytic activity">
    <reaction evidence="10">
        <text>1D-myo-inositol 3,4,5,6-tetrakisphosphate + ATP = 1D-myo-inositol 1,3,4,5,6-pentakisphosphate + ADP + H(+)</text>
        <dbReference type="Rhea" id="RHEA:12452"/>
        <dbReference type="ChEBI" id="CHEBI:15378"/>
        <dbReference type="ChEBI" id="CHEBI:30616"/>
        <dbReference type="ChEBI" id="CHEBI:57539"/>
        <dbReference type="ChEBI" id="CHEBI:57733"/>
        <dbReference type="ChEBI" id="CHEBI:456216"/>
        <dbReference type="EC" id="2.7.1.134"/>
    </reaction>
</comment>
<comment type="catalytic activity">
    <reaction evidence="10">
        <text>1D-myo-inositol 1,3,4-trisphosphate + ATP = 1D-myo-inositol 1,3,4,5-tetrakisphosphate + ADP + H(+)</text>
        <dbReference type="Rhea" id="RHEA:13253"/>
        <dbReference type="ChEBI" id="CHEBI:15378"/>
        <dbReference type="ChEBI" id="CHEBI:30616"/>
        <dbReference type="ChEBI" id="CHEBI:57895"/>
        <dbReference type="ChEBI" id="CHEBI:58414"/>
        <dbReference type="ChEBI" id="CHEBI:456216"/>
        <dbReference type="EC" id="2.7.1.159"/>
    </reaction>
</comment>
<comment type="catalytic activity">
    <reaction evidence="10">
        <text>1D-myo-inositol 1,3,4-trisphosphate + ATP = 1D-myo-inositol 1,3,4,6-tetrakisphosphate + ADP + H(+)</text>
        <dbReference type="Rhea" id="RHEA:20940"/>
        <dbReference type="ChEBI" id="CHEBI:15378"/>
        <dbReference type="ChEBI" id="CHEBI:30616"/>
        <dbReference type="ChEBI" id="CHEBI:57660"/>
        <dbReference type="ChEBI" id="CHEBI:58414"/>
        <dbReference type="ChEBI" id="CHEBI:456216"/>
        <dbReference type="EC" id="2.7.1.159"/>
    </reaction>
</comment>
<comment type="cofactor">
    <cofactor evidence="1">
        <name>Mg(2+)</name>
        <dbReference type="ChEBI" id="CHEBI:18420"/>
    </cofactor>
    <text evidence="1">Binds 2 magnesium ions per subunit.</text>
</comment>
<comment type="subunit">
    <text evidence="1">Monomer.</text>
</comment>
<comment type="tissue specificity">
    <text evidence="6">Expressed in roots, leaves, flowers, anthers and embryos.</text>
</comment>
<comment type="induction">
    <text evidence="7">By drought stress.</text>
</comment>
<comment type="similarity">
    <text evidence="10">Belongs to the ITPK1 family.</text>
</comment>
<comment type="sequence caution" evidence="10">
    <conflict type="erroneous initiation">
        <sequence resource="EMBL-CDS" id="AAK00417"/>
    </conflict>
    <text>Truncated N-terminus.</text>
</comment>
<dbReference type="EC" id="2.7.1.134" evidence="10"/>
<dbReference type="EC" id="2.7.1.159" evidence="10"/>
<dbReference type="EMBL" id="AC069324">
    <property type="protein sequence ID" value="AAK00417.2"/>
    <property type="status" value="ALT_INIT"/>
    <property type="molecule type" value="Genomic_DNA"/>
</dbReference>
<dbReference type="EMBL" id="DP000086">
    <property type="protein sequence ID" value="ABB46580.1"/>
    <property type="molecule type" value="Genomic_DNA"/>
</dbReference>
<dbReference type="EMBL" id="AP008216">
    <property type="protein sequence ID" value="BAF25933.1"/>
    <property type="molecule type" value="Genomic_DNA"/>
</dbReference>
<dbReference type="EMBL" id="AP014966">
    <property type="protein sequence ID" value="BAT09582.1"/>
    <property type="molecule type" value="Genomic_DNA"/>
</dbReference>
<dbReference type="EMBL" id="CM000147">
    <property type="protein sequence ID" value="EEE50447.1"/>
    <property type="molecule type" value="Genomic_DNA"/>
</dbReference>
<dbReference type="EMBL" id="AK106544">
    <property type="protein sequence ID" value="BAG97757.1"/>
    <property type="molecule type" value="mRNA"/>
</dbReference>
<dbReference type="RefSeq" id="XP_015615026.1">
    <property type="nucleotide sequence ID" value="XM_015759540.1"/>
</dbReference>
<dbReference type="SMR" id="Q33BI9"/>
<dbReference type="FunCoup" id="Q33BI9">
    <property type="interactions" value="146"/>
</dbReference>
<dbReference type="STRING" id="39947.Q33BI9"/>
<dbReference type="PaxDb" id="39947-Q33BI9"/>
<dbReference type="EnsemblPlants" id="Os10t0103800-01">
    <property type="protein sequence ID" value="Os10t0103800-01"/>
    <property type="gene ID" value="Os10g0103800"/>
</dbReference>
<dbReference type="Gramene" id="Os10t0103800-01">
    <property type="protein sequence ID" value="Os10t0103800-01"/>
    <property type="gene ID" value="Os10g0103800"/>
</dbReference>
<dbReference type="KEGG" id="dosa:Os10g0103800"/>
<dbReference type="eggNOG" id="ENOG502QQS1">
    <property type="taxonomic scope" value="Eukaryota"/>
</dbReference>
<dbReference type="HOGENOM" id="CLU_041857_0_0_1"/>
<dbReference type="InParanoid" id="Q33BI9"/>
<dbReference type="OMA" id="SAIVHKM"/>
<dbReference type="OrthoDB" id="25308at2759"/>
<dbReference type="PlantReactome" id="R-OSA-1119434">
    <property type="pathway name" value="Phytic acid biosynthesis (lipid-independent)"/>
</dbReference>
<dbReference type="Proteomes" id="UP000000763">
    <property type="component" value="Chromosome 10"/>
</dbReference>
<dbReference type="Proteomes" id="UP000007752">
    <property type="component" value="Chromosome 10"/>
</dbReference>
<dbReference type="Proteomes" id="UP000059680">
    <property type="component" value="Chromosome 10"/>
</dbReference>
<dbReference type="GO" id="GO:0005524">
    <property type="term" value="F:ATP binding"/>
    <property type="evidence" value="ECO:0007669"/>
    <property type="project" value="UniProtKB-KW"/>
</dbReference>
<dbReference type="GO" id="GO:0052726">
    <property type="term" value="F:inositol-1,3,4-trisphosphate 5-kinase activity"/>
    <property type="evidence" value="ECO:0000318"/>
    <property type="project" value="GO_Central"/>
</dbReference>
<dbReference type="GO" id="GO:0052725">
    <property type="term" value="F:inositol-1,3,4-trisphosphate 6-kinase activity"/>
    <property type="evidence" value="ECO:0000318"/>
    <property type="project" value="GO_Central"/>
</dbReference>
<dbReference type="GO" id="GO:0047325">
    <property type="term" value="F:inositol-3,4,5,6-tetrakisphosphate 1-kinase activity"/>
    <property type="evidence" value="ECO:0000318"/>
    <property type="project" value="GO_Central"/>
</dbReference>
<dbReference type="GO" id="GO:0000287">
    <property type="term" value="F:magnesium ion binding"/>
    <property type="evidence" value="ECO:0007669"/>
    <property type="project" value="InterPro"/>
</dbReference>
<dbReference type="GO" id="GO:0032957">
    <property type="term" value="P:inositol trisphosphate metabolic process"/>
    <property type="evidence" value="ECO:0007669"/>
    <property type="project" value="InterPro"/>
</dbReference>
<dbReference type="Gene3D" id="3.30.470.20">
    <property type="entry name" value="ATP-grasp fold, B domain"/>
    <property type="match status" value="1"/>
</dbReference>
<dbReference type="InterPro" id="IPR008656">
    <property type="entry name" value="Inositol_tetrakis-P_1-kinase"/>
</dbReference>
<dbReference type="InterPro" id="IPR040464">
    <property type="entry name" value="InsP(3)kin_ATP-grasp"/>
</dbReference>
<dbReference type="InterPro" id="IPR041429">
    <property type="entry name" value="ITPK1_N"/>
</dbReference>
<dbReference type="PANTHER" id="PTHR14217">
    <property type="entry name" value="INOSITOL-TETRAKISPHOSPHATE 1-KINASE"/>
    <property type="match status" value="1"/>
</dbReference>
<dbReference type="PANTHER" id="PTHR14217:SF39">
    <property type="entry name" value="INOSITOL-TETRAKISPHOSPHATE 1-KINASE 3"/>
    <property type="match status" value="1"/>
</dbReference>
<dbReference type="Pfam" id="PF05770">
    <property type="entry name" value="Ins134_P3_kin"/>
    <property type="match status" value="1"/>
</dbReference>
<dbReference type="Pfam" id="PF17927">
    <property type="entry name" value="Ins134_P3_kin_N"/>
    <property type="match status" value="1"/>
</dbReference>
<dbReference type="PIRSF" id="PIRSF038186">
    <property type="entry name" value="ITPK"/>
    <property type="match status" value="1"/>
</dbReference>
<dbReference type="SUPFAM" id="SSF56059">
    <property type="entry name" value="Glutathione synthetase ATP-binding domain-like"/>
    <property type="match status" value="1"/>
</dbReference>
<keyword id="KW-0067">ATP-binding</keyword>
<keyword id="KW-0418">Kinase</keyword>
<keyword id="KW-0460">Magnesium</keyword>
<keyword id="KW-0479">Metal-binding</keyword>
<keyword id="KW-0547">Nucleotide-binding</keyword>
<keyword id="KW-1185">Reference proteome</keyword>
<keyword id="KW-0808">Transferase</keyword>
<evidence type="ECO:0000250" key="1">
    <source>
        <dbReference type="UniProtKB" id="Q13572"/>
    </source>
</evidence>
<evidence type="ECO:0000250" key="2">
    <source>
        <dbReference type="UniProtKB" id="Q84Y01"/>
    </source>
</evidence>
<evidence type="ECO:0000250" key="3">
    <source>
        <dbReference type="UniProtKB" id="Q9XYQ1"/>
    </source>
</evidence>
<evidence type="ECO:0000255" key="4">
    <source>
        <dbReference type="PROSITE-ProRule" id="PRU00409"/>
    </source>
</evidence>
<evidence type="ECO:0000256" key="5">
    <source>
        <dbReference type="SAM" id="MobiDB-lite"/>
    </source>
</evidence>
<evidence type="ECO:0000269" key="6">
    <source>
    </source>
</evidence>
<evidence type="ECO:0000269" key="7">
    <source>
    </source>
</evidence>
<evidence type="ECO:0000303" key="8">
    <source>
    </source>
</evidence>
<evidence type="ECO:0000303" key="9">
    <source>
    </source>
</evidence>
<evidence type="ECO:0000305" key="10"/>
<evidence type="ECO:0000312" key="11">
    <source>
        <dbReference type="EMBL" id="AAK00417.2"/>
    </source>
</evidence>
<evidence type="ECO:0000312" key="12">
    <source>
        <dbReference type="EMBL" id="ABB46580.1"/>
    </source>
</evidence>
<evidence type="ECO:0000312" key="13">
    <source>
        <dbReference type="EMBL" id="BAF25933.1"/>
    </source>
</evidence>
<evidence type="ECO:0000312" key="14">
    <source>
        <dbReference type="EMBL" id="EEE50447.1"/>
    </source>
</evidence>
<accession>Q33BI9</accession>
<accession>A0A0P0XRB9</accession>
<accession>Q9AYJ2</accession>
<name>ITPK1_ORYSJ</name>
<gene>
    <name evidence="10" type="primary">ITPK1</name>
    <name evidence="13" type="ordered locus">Os10g0103800</name>
    <name evidence="12" type="ordered locus">LOC_Os10g01480</name>
    <name evidence="14" type="ORF">OsJ_30457</name>
    <name evidence="11" type="ORF">OSJNBa0071K19.6</name>
</gene>
<organism>
    <name type="scientific">Oryza sativa subsp. japonica</name>
    <name type="common">Rice</name>
    <dbReference type="NCBI Taxonomy" id="39947"/>
    <lineage>
        <taxon>Eukaryota</taxon>
        <taxon>Viridiplantae</taxon>
        <taxon>Streptophyta</taxon>
        <taxon>Embryophyta</taxon>
        <taxon>Tracheophyta</taxon>
        <taxon>Spermatophyta</taxon>
        <taxon>Magnoliopsida</taxon>
        <taxon>Liliopsida</taxon>
        <taxon>Poales</taxon>
        <taxon>Poaceae</taxon>
        <taxon>BOP clade</taxon>
        <taxon>Oryzoideae</taxon>
        <taxon>Oryzeae</taxon>
        <taxon>Oryzinae</taxon>
        <taxon>Oryza</taxon>
        <taxon>Oryza sativa</taxon>
    </lineage>
</organism>